<evidence type="ECO:0000255" key="1">
    <source>
        <dbReference type="HAMAP-Rule" id="MF_00811"/>
    </source>
</evidence>
<name>DAPD_PARXL</name>
<gene>
    <name evidence="1" type="primary">dapD</name>
    <name type="ordered locus">Bxeno_A2747</name>
    <name type="ORF">Bxe_A1670</name>
</gene>
<protein>
    <recommendedName>
        <fullName evidence="1">2,3,4,5-tetrahydropyridine-2,6-dicarboxylate N-succinyltransferase</fullName>
        <ecNumber evidence="1">2.3.1.117</ecNumber>
    </recommendedName>
    <alternativeName>
        <fullName evidence="1">Tetrahydrodipicolinate N-succinyltransferase</fullName>
        <shortName evidence="1">THDP succinyltransferase</shortName>
        <shortName evidence="1">THP succinyltransferase</shortName>
        <shortName evidence="1">Tetrahydropicolinate succinylase</shortName>
    </alternativeName>
</protein>
<reference key="1">
    <citation type="journal article" date="2006" name="Proc. Natl. Acad. Sci. U.S.A.">
        <title>Burkholderia xenovorans LB400 harbors a multi-replicon, 9.73-Mbp genome shaped for versatility.</title>
        <authorList>
            <person name="Chain P.S.G."/>
            <person name="Denef V.J."/>
            <person name="Konstantinidis K.T."/>
            <person name="Vergez L.M."/>
            <person name="Agullo L."/>
            <person name="Reyes V.L."/>
            <person name="Hauser L."/>
            <person name="Cordova M."/>
            <person name="Gomez L."/>
            <person name="Gonzalez M."/>
            <person name="Land M."/>
            <person name="Lao V."/>
            <person name="Larimer F."/>
            <person name="LiPuma J.J."/>
            <person name="Mahenthiralingam E."/>
            <person name="Malfatti S.A."/>
            <person name="Marx C.J."/>
            <person name="Parnell J.J."/>
            <person name="Ramette A."/>
            <person name="Richardson P."/>
            <person name="Seeger M."/>
            <person name="Smith D."/>
            <person name="Spilker T."/>
            <person name="Sul W.J."/>
            <person name="Tsoi T.V."/>
            <person name="Ulrich L.E."/>
            <person name="Zhulin I.B."/>
            <person name="Tiedje J.M."/>
        </authorList>
    </citation>
    <scope>NUCLEOTIDE SEQUENCE [LARGE SCALE GENOMIC DNA]</scope>
    <source>
        <strain>LB400</strain>
    </source>
</reference>
<organism>
    <name type="scientific">Paraburkholderia xenovorans (strain LB400)</name>
    <dbReference type="NCBI Taxonomy" id="266265"/>
    <lineage>
        <taxon>Bacteria</taxon>
        <taxon>Pseudomonadati</taxon>
        <taxon>Pseudomonadota</taxon>
        <taxon>Betaproteobacteria</taxon>
        <taxon>Burkholderiales</taxon>
        <taxon>Burkholderiaceae</taxon>
        <taxon>Paraburkholderia</taxon>
    </lineage>
</organism>
<feature type="chain" id="PRO_1000047134" description="2,3,4,5-tetrahydropyridine-2,6-dicarboxylate N-succinyltransferase">
    <location>
        <begin position="1"/>
        <end position="275"/>
    </location>
</feature>
<feature type="binding site" evidence="1">
    <location>
        <position position="106"/>
    </location>
    <ligand>
        <name>substrate</name>
    </ligand>
</feature>
<feature type="binding site" evidence="1">
    <location>
        <position position="143"/>
    </location>
    <ligand>
        <name>substrate</name>
    </ligand>
</feature>
<accession>Q13XA4</accession>
<sequence>MSQQLQQIIDTAWENRAELSPKAAPADVREAVAHAIEQLDKGLLRVAEKKDGDWVVNQWLKKAVLLSFRLEDNAPMPAGGYSQFYDKVPSKFASYTAEDFAAGGFRVVPPAIARRGSFIAKNVVLMPSYTNIGAYVDEGTMVDTWATVGSCAQIGKNVHLSGGVGIGGVLEPLQANPVIIEDNCFIGARSEVVEGVIVEENSVISMGVYLGQSTKIYDRETGEVTYGRIPAGSVVVAGNLPSKDGTHSLYCAVIVKKVDARTRAKVGLNELLRGD</sequence>
<proteinExistence type="inferred from homology"/>
<comment type="catalytic activity">
    <reaction evidence="1">
        <text>(S)-2,3,4,5-tetrahydrodipicolinate + succinyl-CoA + H2O = (S)-2-succinylamino-6-oxoheptanedioate + CoA</text>
        <dbReference type="Rhea" id="RHEA:17325"/>
        <dbReference type="ChEBI" id="CHEBI:15377"/>
        <dbReference type="ChEBI" id="CHEBI:15685"/>
        <dbReference type="ChEBI" id="CHEBI:16845"/>
        <dbReference type="ChEBI" id="CHEBI:57287"/>
        <dbReference type="ChEBI" id="CHEBI:57292"/>
        <dbReference type="EC" id="2.3.1.117"/>
    </reaction>
</comment>
<comment type="pathway">
    <text evidence="1">Amino-acid biosynthesis; L-lysine biosynthesis via DAP pathway; LL-2,6-diaminopimelate from (S)-tetrahydrodipicolinate (succinylase route): step 1/3.</text>
</comment>
<comment type="subunit">
    <text evidence="1">Homotrimer.</text>
</comment>
<comment type="subcellular location">
    <subcellularLocation>
        <location evidence="1">Cytoplasm</location>
    </subcellularLocation>
</comment>
<comment type="similarity">
    <text evidence="1">Belongs to the transferase hexapeptide repeat family.</text>
</comment>
<dbReference type="EC" id="2.3.1.117" evidence="1"/>
<dbReference type="EMBL" id="CP000270">
    <property type="protein sequence ID" value="ABE31285.1"/>
    <property type="molecule type" value="Genomic_DNA"/>
</dbReference>
<dbReference type="RefSeq" id="WP_011488877.1">
    <property type="nucleotide sequence ID" value="NC_007951.1"/>
</dbReference>
<dbReference type="SMR" id="Q13XA4"/>
<dbReference type="STRING" id="266265.Bxe_A1670"/>
<dbReference type="KEGG" id="bxb:DR64_3835"/>
<dbReference type="KEGG" id="bxe:Bxe_A1670"/>
<dbReference type="PATRIC" id="fig|266265.5.peg.2880"/>
<dbReference type="eggNOG" id="COG2171">
    <property type="taxonomic scope" value="Bacteria"/>
</dbReference>
<dbReference type="OrthoDB" id="9775362at2"/>
<dbReference type="UniPathway" id="UPA00034">
    <property type="reaction ID" value="UER00019"/>
</dbReference>
<dbReference type="Proteomes" id="UP000001817">
    <property type="component" value="Chromosome 1"/>
</dbReference>
<dbReference type="GO" id="GO:0005737">
    <property type="term" value="C:cytoplasm"/>
    <property type="evidence" value="ECO:0007669"/>
    <property type="project" value="UniProtKB-SubCell"/>
</dbReference>
<dbReference type="GO" id="GO:0008666">
    <property type="term" value="F:2,3,4,5-tetrahydropyridine-2,6-dicarboxylate N-succinyltransferase activity"/>
    <property type="evidence" value="ECO:0007669"/>
    <property type="project" value="UniProtKB-UniRule"/>
</dbReference>
<dbReference type="GO" id="GO:0016779">
    <property type="term" value="F:nucleotidyltransferase activity"/>
    <property type="evidence" value="ECO:0007669"/>
    <property type="project" value="TreeGrafter"/>
</dbReference>
<dbReference type="GO" id="GO:0019877">
    <property type="term" value="P:diaminopimelate biosynthetic process"/>
    <property type="evidence" value="ECO:0007669"/>
    <property type="project" value="UniProtKB-UniRule"/>
</dbReference>
<dbReference type="GO" id="GO:0009089">
    <property type="term" value="P:lysine biosynthetic process via diaminopimelate"/>
    <property type="evidence" value="ECO:0007669"/>
    <property type="project" value="UniProtKB-UniRule"/>
</dbReference>
<dbReference type="CDD" id="cd03350">
    <property type="entry name" value="LbH_THP_succinylT"/>
    <property type="match status" value="1"/>
</dbReference>
<dbReference type="Gene3D" id="2.160.10.10">
    <property type="entry name" value="Hexapeptide repeat proteins"/>
    <property type="match status" value="1"/>
</dbReference>
<dbReference type="Gene3D" id="1.10.166.10">
    <property type="entry name" value="Tetrahydrodipicolinate-N-succinyltransferase, N-terminal domain"/>
    <property type="match status" value="1"/>
</dbReference>
<dbReference type="HAMAP" id="MF_00811">
    <property type="entry name" value="DapD"/>
    <property type="match status" value="1"/>
</dbReference>
<dbReference type="InterPro" id="IPR005664">
    <property type="entry name" value="DapD_Trfase_Hexpep_rpt_fam"/>
</dbReference>
<dbReference type="InterPro" id="IPR001451">
    <property type="entry name" value="Hexapep"/>
</dbReference>
<dbReference type="InterPro" id="IPR018357">
    <property type="entry name" value="Hexapep_transf_CS"/>
</dbReference>
<dbReference type="InterPro" id="IPR023180">
    <property type="entry name" value="THP_succinylTrfase_dom1"/>
</dbReference>
<dbReference type="InterPro" id="IPR037133">
    <property type="entry name" value="THP_succinylTrfase_N_sf"/>
</dbReference>
<dbReference type="InterPro" id="IPR011004">
    <property type="entry name" value="Trimer_LpxA-like_sf"/>
</dbReference>
<dbReference type="NCBIfam" id="TIGR00965">
    <property type="entry name" value="dapD"/>
    <property type="match status" value="1"/>
</dbReference>
<dbReference type="NCBIfam" id="NF008808">
    <property type="entry name" value="PRK11830.1"/>
    <property type="match status" value="1"/>
</dbReference>
<dbReference type="PANTHER" id="PTHR19136:SF52">
    <property type="entry name" value="2,3,4,5-TETRAHYDROPYRIDINE-2,6-DICARBOXYLATE N-SUCCINYLTRANSFERASE"/>
    <property type="match status" value="1"/>
</dbReference>
<dbReference type="PANTHER" id="PTHR19136">
    <property type="entry name" value="MOLYBDENUM COFACTOR GUANYLYLTRANSFERASE"/>
    <property type="match status" value="1"/>
</dbReference>
<dbReference type="Pfam" id="PF14602">
    <property type="entry name" value="Hexapep_2"/>
    <property type="match status" value="1"/>
</dbReference>
<dbReference type="Pfam" id="PF14805">
    <property type="entry name" value="THDPS_N_2"/>
    <property type="match status" value="1"/>
</dbReference>
<dbReference type="SUPFAM" id="SSF51161">
    <property type="entry name" value="Trimeric LpxA-like enzymes"/>
    <property type="match status" value="1"/>
</dbReference>
<dbReference type="PROSITE" id="PS00101">
    <property type="entry name" value="HEXAPEP_TRANSFERASES"/>
    <property type="match status" value="1"/>
</dbReference>
<keyword id="KW-0012">Acyltransferase</keyword>
<keyword id="KW-0028">Amino-acid biosynthesis</keyword>
<keyword id="KW-0963">Cytoplasm</keyword>
<keyword id="KW-0220">Diaminopimelate biosynthesis</keyword>
<keyword id="KW-0457">Lysine biosynthesis</keyword>
<keyword id="KW-1185">Reference proteome</keyword>
<keyword id="KW-0677">Repeat</keyword>
<keyword id="KW-0808">Transferase</keyword>